<keyword id="KW-0131">Cell cycle</keyword>
<keyword id="KW-0132">Cell division</keyword>
<keyword id="KW-0963">Cytoplasm</keyword>
<keyword id="KW-0206">Cytoskeleton</keyword>
<keyword id="KW-1185">Reference proteome</keyword>
<sequence>MAATAAERLFSLELLVDWVRLDSPCFASPAVAFRLLDFPPLLILPPAAPDPEPQRGAITFGRGKACLLRLRPAALRRPRLRAALLQLPAVPTPAPLLLGACDILLVPSVGQRGIFTLRGPEAERVGELALFYRLTDLGRFPPGAPQLRSPLSPACITGSEALEVSEPRTKETSKPCTKDTSARCLQCVSNGRFLEAPEPCAKDTDNWSAGDSDASAVQKSWEEAILHSKASSGDMASAPCSPAPSGRTVSPVSLEVTELDFETNTFCPPPLYYTHLTQEKAPSARVEITIEPQRNEPEDLEDAFPETKPVGPTIRPVKHTRAAIQESPPVLLNLPQMQGPGEANEAPCPPQTEQSTVGAIRQLPLLNALLMELSLLCNQPVANPSQVHPHLAWLYRGEHKGPDPSTKSTSRSESKSNKLSAQENEKLVSPQSTKNPKGKHSKISGSPPPKVTKGRLLYGLTNTLRLRLQQTNPGMLVVHEKREQYRRSQIRAVGPKFRIPSWKGKVSSLAAESQMPPQLPGDTLTDSNGKVSSWAVQSQLPPQLPRDRSLDSYGSFAEGSDTSMLISSGFDESSRTREAKQSHAMKKETVGQSENKTVTSLRAPVSPAVSVIPERSPRSNILRGKWKKQVQSPGLSRQDPAVDKAVGEGIDGKQVKAASAADTNENRPPSRKSSCESTSELQCWDGSTSPCYSEDFCTTENNSRSLPAPDSSTGAEYAQKGSWASKSSEARLSTRKNSSESSSVFTPPFSAGSPVCSQKRSRVLKTHDSLEEASSLSTSDFSSQWTNEKENQADPGSSKIRRRQDRSTKLKVGTGHKSSEKSHSARTSQVSSYEPSNLSELELKAIDDIDSASTGFQEEEDGLGSLRISRQCRDICELVINKLPGYTV</sequence>
<reference key="1">
    <citation type="submission" date="2005-07" db="EMBL/GenBank/DDBJ databases">
        <authorList>
            <person name="Mural R.J."/>
            <person name="Adams M.D."/>
            <person name="Myers E.W."/>
            <person name="Smith H.O."/>
            <person name="Venter J.C."/>
        </authorList>
    </citation>
    <scope>NUCLEOTIDE SEQUENCE [LARGE SCALE GENOMIC DNA]</scope>
    <source>
        <strain>Brown Norway</strain>
    </source>
</reference>
<dbReference type="EMBL" id="CH474054">
    <property type="protein sequence ID" value="EDL96759.1"/>
    <property type="molecule type" value="Genomic_DNA"/>
</dbReference>
<dbReference type="RefSeq" id="NP_001264320.1">
    <property type="nucleotide sequence ID" value="NM_001277391.1"/>
</dbReference>
<dbReference type="FunCoup" id="D3ZAP3">
    <property type="interactions" value="19"/>
</dbReference>
<dbReference type="STRING" id="10116.ENSRNOP00000036118"/>
<dbReference type="GlyGen" id="D3ZAP3">
    <property type="glycosylation" value="2 sites"/>
</dbReference>
<dbReference type="PhosphoSitePlus" id="D3ZAP3"/>
<dbReference type="PaxDb" id="10116-ENSRNOP00000036118"/>
<dbReference type="Ensembl" id="ENSRNOT00000031717.5">
    <property type="protein sequence ID" value="ENSRNOP00000036118.3"/>
    <property type="gene ID" value="ENSRNOG00000028652.5"/>
</dbReference>
<dbReference type="GeneID" id="307948"/>
<dbReference type="KEGG" id="rno:307948"/>
<dbReference type="AGR" id="RGD:1308644"/>
<dbReference type="CTD" id="54627"/>
<dbReference type="RGD" id="1308644">
    <property type="gene designation" value="Map10"/>
</dbReference>
<dbReference type="eggNOG" id="ENOG502QVBX">
    <property type="taxonomic scope" value="Eukaryota"/>
</dbReference>
<dbReference type="GeneTree" id="ENSGT00390000008459"/>
<dbReference type="HOGENOM" id="CLU_014844_0_0_1"/>
<dbReference type="InParanoid" id="D3ZAP3"/>
<dbReference type="OMA" id="EDFCTTE"/>
<dbReference type="OrthoDB" id="90759at9989"/>
<dbReference type="PhylomeDB" id="D3ZAP3"/>
<dbReference type="TreeFam" id="TF338644"/>
<dbReference type="PRO" id="PR:D3ZAP3"/>
<dbReference type="Proteomes" id="UP000002494">
    <property type="component" value="Chromosome 19"/>
</dbReference>
<dbReference type="Proteomes" id="UP000234681">
    <property type="component" value="Chromosome 19"/>
</dbReference>
<dbReference type="Bgee" id="ENSRNOG00000028652">
    <property type="expression patterns" value="Expressed in testis and 17 other cell types or tissues"/>
</dbReference>
<dbReference type="GO" id="GO:0005813">
    <property type="term" value="C:centrosome"/>
    <property type="evidence" value="ECO:0000250"/>
    <property type="project" value="UniProtKB"/>
</dbReference>
<dbReference type="GO" id="GO:0005881">
    <property type="term" value="C:cytoplasmic microtubule"/>
    <property type="evidence" value="ECO:0000250"/>
    <property type="project" value="UniProtKB"/>
</dbReference>
<dbReference type="GO" id="GO:0030496">
    <property type="term" value="C:midbody"/>
    <property type="evidence" value="ECO:0000250"/>
    <property type="project" value="UniProtKB"/>
</dbReference>
<dbReference type="GO" id="GO:1990023">
    <property type="term" value="C:mitotic spindle midzone"/>
    <property type="evidence" value="ECO:0000250"/>
    <property type="project" value="UniProtKB"/>
</dbReference>
<dbReference type="GO" id="GO:0097431">
    <property type="term" value="C:mitotic spindle pole"/>
    <property type="evidence" value="ECO:0000250"/>
    <property type="project" value="UniProtKB"/>
</dbReference>
<dbReference type="GO" id="GO:0008017">
    <property type="term" value="F:microtubule binding"/>
    <property type="evidence" value="ECO:0000250"/>
    <property type="project" value="UniProtKB"/>
</dbReference>
<dbReference type="GO" id="GO:0051301">
    <property type="term" value="P:cell division"/>
    <property type="evidence" value="ECO:0007669"/>
    <property type="project" value="UniProtKB-KW"/>
</dbReference>
<dbReference type="GO" id="GO:0031122">
    <property type="term" value="P:cytoplasmic microtubule organization"/>
    <property type="evidence" value="ECO:0000250"/>
    <property type="project" value="UniProtKB"/>
</dbReference>
<dbReference type="GO" id="GO:0051256">
    <property type="term" value="P:mitotic spindle midzone assembly"/>
    <property type="evidence" value="ECO:0000250"/>
    <property type="project" value="UniProtKB"/>
</dbReference>
<dbReference type="GO" id="GO:0032467">
    <property type="term" value="P:positive regulation of cytokinesis"/>
    <property type="evidence" value="ECO:0000250"/>
    <property type="project" value="UniProtKB"/>
</dbReference>
<dbReference type="GO" id="GO:0032886">
    <property type="term" value="P:regulation of microtubule-based process"/>
    <property type="evidence" value="ECO:0000250"/>
    <property type="project" value="UniProtKB"/>
</dbReference>
<dbReference type="InterPro" id="IPR039302">
    <property type="entry name" value="MAP10"/>
</dbReference>
<dbReference type="InterPro" id="IPR026679">
    <property type="entry name" value="MAP10_C-term"/>
</dbReference>
<dbReference type="PANTHER" id="PTHR21831">
    <property type="entry name" value="MICROTUBULE-ASSOCIATED PROTEIN 10"/>
    <property type="match status" value="1"/>
</dbReference>
<dbReference type="PANTHER" id="PTHR21831:SF2">
    <property type="entry name" value="MICROTUBULE-ASSOCIATED PROTEIN 10"/>
    <property type="match status" value="1"/>
</dbReference>
<dbReference type="Pfam" id="PF14925">
    <property type="entry name" value="HPHLAWLY"/>
    <property type="match status" value="2"/>
</dbReference>
<dbReference type="Pfam" id="PF14924">
    <property type="entry name" value="MAP10_N"/>
    <property type="match status" value="1"/>
</dbReference>
<name>MAP10_RAT</name>
<gene>
    <name type="primary">Map10</name>
</gene>
<protein>
    <recommendedName>
        <fullName>Microtubule-associated protein 10</fullName>
    </recommendedName>
    <alternativeName>
        <fullName>Microtubule regulator of 120 KDa</fullName>
    </alternativeName>
</protein>
<evidence type="ECO:0000250" key="1"/>
<evidence type="ECO:0000256" key="2">
    <source>
        <dbReference type="SAM" id="MobiDB-lite"/>
    </source>
</evidence>
<proteinExistence type="inferred from homology"/>
<organism>
    <name type="scientific">Rattus norvegicus</name>
    <name type="common">Rat</name>
    <dbReference type="NCBI Taxonomy" id="10116"/>
    <lineage>
        <taxon>Eukaryota</taxon>
        <taxon>Metazoa</taxon>
        <taxon>Chordata</taxon>
        <taxon>Craniata</taxon>
        <taxon>Vertebrata</taxon>
        <taxon>Euteleostomi</taxon>
        <taxon>Mammalia</taxon>
        <taxon>Eutheria</taxon>
        <taxon>Euarchontoglires</taxon>
        <taxon>Glires</taxon>
        <taxon>Rodentia</taxon>
        <taxon>Myomorpha</taxon>
        <taxon>Muroidea</taxon>
        <taxon>Muridae</taxon>
        <taxon>Murinae</taxon>
        <taxon>Rattus</taxon>
    </lineage>
</organism>
<accession>D3ZAP3</accession>
<feature type="chain" id="PRO_0000403448" description="Microtubule-associated protein 10">
    <location>
        <begin position="1"/>
        <end position="888"/>
    </location>
</feature>
<feature type="region of interest" description="Disordered" evidence="2">
    <location>
        <begin position="398"/>
        <end position="454"/>
    </location>
</feature>
<feature type="region of interest" description="Disordered" evidence="2">
    <location>
        <begin position="508"/>
        <end position="602"/>
    </location>
</feature>
<feature type="region of interest" description="Disordered" evidence="2">
    <location>
        <begin position="620"/>
        <end position="642"/>
    </location>
</feature>
<feature type="region of interest" description="Disordered" evidence="2">
    <location>
        <begin position="654"/>
        <end position="683"/>
    </location>
</feature>
<feature type="region of interest" description="Disordered" evidence="2">
    <location>
        <begin position="699"/>
        <end position="836"/>
    </location>
</feature>
<feature type="compositionally biased region" description="Polar residues" evidence="2">
    <location>
        <begin position="524"/>
        <end position="541"/>
    </location>
</feature>
<feature type="compositionally biased region" description="Basic and acidic residues" evidence="2">
    <location>
        <begin position="572"/>
        <end position="589"/>
    </location>
</feature>
<feature type="compositionally biased region" description="Polar residues" evidence="2">
    <location>
        <begin position="590"/>
        <end position="600"/>
    </location>
</feature>
<feature type="compositionally biased region" description="Polar residues" evidence="2">
    <location>
        <begin position="661"/>
        <end position="683"/>
    </location>
</feature>
<feature type="compositionally biased region" description="Polar residues" evidence="2">
    <location>
        <begin position="699"/>
        <end position="714"/>
    </location>
</feature>
<feature type="compositionally biased region" description="Polar residues" evidence="2">
    <location>
        <begin position="722"/>
        <end position="745"/>
    </location>
</feature>
<feature type="compositionally biased region" description="Polar residues" evidence="2">
    <location>
        <begin position="772"/>
        <end position="786"/>
    </location>
</feature>
<feature type="compositionally biased region" description="Polar residues" evidence="2">
    <location>
        <begin position="825"/>
        <end position="836"/>
    </location>
</feature>
<comment type="function">
    <text evidence="1">Microtubule-associated protein (MAP) that plays a role in the regulation of cell division; promotes microtubule stability and participates in the organization of the spindle midzone and normal progress of cytokinesis.</text>
</comment>
<comment type="subunit">
    <text evidence="1">Interacts (via middle region) with microtubules.</text>
</comment>
<comment type="subcellular location">
    <subcellularLocation>
        <location evidence="1">Cytoplasm</location>
        <location evidence="1">Cytoskeleton</location>
    </subcellularLocation>
    <subcellularLocation>
        <location evidence="1">Cytoplasm</location>
        <location evidence="1">Cytoskeleton</location>
        <location evidence="1">Spindle pole</location>
    </subcellularLocation>
    <subcellularLocation>
        <location evidence="1">Cytoplasm</location>
        <location evidence="1">Cytoskeleton</location>
        <location evidence="1">Microtubule organizing center</location>
        <location evidence="1">Centrosome</location>
    </subcellularLocation>
    <subcellularLocation>
        <location evidence="1">Midbody</location>
    </subcellularLocation>
    <text evidence="1">Localized at stabilized microtubules (MTs) during interphase and to the mitotic apparatus during mitosis. Localized at spindle poles in metaphase and spindle midzone during telophase. Colocalized with Polo-like kinase PLK1 to the center of spindle midzone. Localized at the midbody during cytokinesis. Colocalized with acetylated-tubulin at MTs (By similarity).</text>
</comment>